<dbReference type="EMBL" id="AE000516">
    <property type="protein sequence ID" value="AAK45160.1"/>
    <property type="molecule type" value="Genomic_DNA"/>
</dbReference>
<dbReference type="PIR" id="H70781">
    <property type="entry name" value="H70781"/>
</dbReference>
<dbReference type="SMR" id="P9WMV0"/>
<dbReference type="KEGG" id="mtc:MT0915"/>
<dbReference type="PATRIC" id="fig|83331.31.peg.983"/>
<dbReference type="HOGENOM" id="CLU_975994_0_0_11"/>
<dbReference type="Proteomes" id="UP000001020">
    <property type="component" value="Chromosome"/>
</dbReference>
<dbReference type="GO" id="GO:0004016">
    <property type="term" value="F:adenylate cyclase activity"/>
    <property type="evidence" value="ECO:0007669"/>
    <property type="project" value="UniProtKB-ARBA"/>
</dbReference>
<dbReference type="GO" id="GO:0009190">
    <property type="term" value="P:cyclic nucleotide biosynthetic process"/>
    <property type="evidence" value="ECO:0007669"/>
    <property type="project" value="InterPro"/>
</dbReference>
<dbReference type="GO" id="GO:0035556">
    <property type="term" value="P:intracellular signal transduction"/>
    <property type="evidence" value="ECO:0007669"/>
    <property type="project" value="InterPro"/>
</dbReference>
<dbReference type="CDD" id="cd07302">
    <property type="entry name" value="CHD"/>
    <property type="match status" value="1"/>
</dbReference>
<dbReference type="FunFam" id="3.30.70.1230:FF:000043">
    <property type="entry name" value="Luxr family transcriptional regulator"/>
    <property type="match status" value="1"/>
</dbReference>
<dbReference type="FunFam" id="3.30.70.1230:FF:000046">
    <property type="entry name" value="Luxr family transcriptional regulator"/>
    <property type="match status" value="1"/>
</dbReference>
<dbReference type="Gene3D" id="3.30.70.1230">
    <property type="entry name" value="Nucleotide cyclase"/>
    <property type="match status" value="2"/>
</dbReference>
<dbReference type="InterPro" id="IPR001054">
    <property type="entry name" value="A/G_cyclase"/>
</dbReference>
<dbReference type="InterPro" id="IPR050697">
    <property type="entry name" value="Adenylyl/Guanylyl_Cyclase_3/4"/>
</dbReference>
<dbReference type="InterPro" id="IPR029787">
    <property type="entry name" value="Nucleotide_cyclase"/>
</dbReference>
<dbReference type="PANTHER" id="PTHR43081:SF1">
    <property type="entry name" value="ADENYLATE CYCLASE, TERMINAL-DIFFERENTIATION SPECIFIC"/>
    <property type="match status" value="1"/>
</dbReference>
<dbReference type="PANTHER" id="PTHR43081">
    <property type="entry name" value="ADENYLATE CYCLASE, TERMINAL-DIFFERENTIATION SPECIFIC-RELATED"/>
    <property type="match status" value="1"/>
</dbReference>
<dbReference type="Pfam" id="PF00211">
    <property type="entry name" value="Guanylate_cyc"/>
    <property type="match status" value="1"/>
</dbReference>
<dbReference type="SMART" id="SM00044">
    <property type="entry name" value="CYCc"/>
    <property type="match status" value="1"/>
</dbReference>
<dbReference type="SUPFAM" id="SSF55073">
    <property type="entry name" value="Nucleotide cyclase"/>
    <property type="match status" value="1"/>
</dbReference>
<dbReference type="PROSITE" id="PS50125">
    <property type="entry name" value="GUANYLATE_CYCLASE_2"/>
    <property type="match status" value="1"/>
</dbReference>
<comment type="similarity">
    <text evidence="1">Belongs to the adenylyl cyclase class-4/guanylyl cyclase family.</text>
</comment>
<organism>
    <name type="scientific">Mycobacterium tuberculosis (strain CDC 1551 / Oshkosh)</name>
    <dbReference type="NCBI Taxonomy" id="83331"/>
    <lineage>
        <taxon>Bacteria</taxon>
        <taxon>Bacillati</taxon>
        <taxon>Actinomycetota</taxon>
        <taxon>Actinomycetes</taxon>
        <taxon>Mycobacteriales</taxon>
        <taxon>Mycobacteriaceae</taxon>
        <taxon>Mycobacterium</taxon>
        <taxon>Mycobacterium tuberculosis complex</taxon>
    </lineage>
</organism>
<protein>
    <recommendedName>
        <fullName>Uncharacterized protein MT0915</fullName>
    </recommendedName>
</protein>
<reference key="1">
    <citation type="journal article" date="2002" name="J. Bacteriol.">
        <title>Whole-genome comparison of Mycobacterium tuberculosis clinical and laboratory strains.</title>
        <authorList>
            <person name="Fleischmann R.D."/>
            <person name="Alland D."/>
            <person name="Eisen J.A."/>
            <person name="Carpenter L."/>
            <person name="White O."/>
            <person name="Peterson J.D."/>
            <person name="DeBoy R.T."/>
            <person name="Dodson R.J."/>
            <person name="Gwinn M.L."/>
            <person name="Haft D.H."/>
            <person name="Hickey E.K."/>
            <person name="Kolonay J.F."/>
            <person name="Nelson W.C."/>
            <person name="Umayam L.A."/>
            <person name="Ermolaeva M.D."/>
            <person name="Salzberg S.L."/>
            <person name="Delcher A."/>
            <person name="Utterback T.R."/>
            <person name="Weidman J.F."/>
            <person name="Khouri H.M."/>
            <person name="Gill J."/>
            <person name="Mikula A."/>
            <person name="Bishai W."/>
            <person name="Jacobs W.R. Jr."/>
            <person name="Venter J.C."/>
            <person name="Fraser C.M."/>
        </authorList>
    </citation>
    <scope>NUCLEOTIDE SEQUENCE [LARGE SCALE GENOMIC DNA]</scope>
    <source>
        <strain>CDC 1551 / Oshkosh</strain>
    </source>
</reference>
<proteinExistence type="inferred from homology"/>
<evidence type="ECO:0000255" key="1">
    <source>
        <dbReference type="PROSITE-ProRule" id="PRU00099"/>
    </source>
</evidence>
<gene>
    <name type="ordered locus">MT0915</name>
</gene>
<accession>P9WMV0</accession>
<accession>L0T6R0</accession>
<accession>Q10551</accession>
<feature type="chain" id="PRO_0000427238" description="Uncharacterized protein MT0915">
    <location>
        <begin position="1"/>
        <end position="285"/>
    </location>
</feature>
<feature type="domain" description="Guanylate cyclase" evidence="1">
    <location>
        <begin position="92"/>
        <end position="199"/>
    </location>
</feature>
<name>Y891_MYCTO</name>
<keyword id="KW-1185">Reference proteome</keyword>
<sequence>MLFNAVHNSLPPNIDIDHAILRGEDHPPTCAKCVARGRISALGSLDLRYHSLRCYAAPPDVGRCEFVPPRRRVLIANQGLDVSRLPPTGTVTLLLADVEESTHLWQMCPEDMATAIAHLDHTVSEAITNHGGVQPVKRYEGDSFVAAFTRASDAAACALDLQRTSLAPIRLRIGLHTGEVQLRDELYVGPTINRTARLRDLAHGGQVVLSAATGDLVTGRLPADAWLVDLGRHPLRGLPRPEWVMQLCHPDIREKFPPLRTAKSSPTSILPAQFTTFVGRRAQIS</sequence>